<dbReference type="EC" id="2.7.1.-"/>
<dbReference type="EMBL" id="AE000782">
    <property type="protein sequence ID" value="AAB89693.1"/>
    <property type="molecule type" value="Genomic_DNA"/>
</dbReference>
<dbReference type="PIR" id="H69443">
    <property type="entry name" value="H69443"/>
</dbReference>
<dbReference type="RefSeq" id="WP_010879050.1">
    <property type="nucleotide sequence ID" value="NC_000917.1"/>
</dbReference>
<dbReference type="SMR" id="O28719"/>
<dbReference type="STRING" id="224325.AF_1553"/>
<dbReference type="PaxDb" id="224325-AF_1553"/>
<dbReference type="EnsemblBacteria" id="AAB89693">
    <property type="protein sequence ID" value="AAB89693"/>
    <property type="gene ID" value="AF_1553"/>
</dbReference>
<dbReference type="GeneID" id="1484781"/>
<dbReference type="KEGG" id="afu:AF_1553"/>
<dbReference type="eggNOG" id="arCOG04063">
    <property type="taxonomic scope" value="Archaea"/>
</dbReference>
<dbReference type="HOGENOM" id="CLU_052998_4_1_2"/>
<dbReference type="OrthoDB" id="24376at2157"/>
<dbReference type="PhylomeDB" id="O28719"/>
<dbReference type="Proteomes" id="UP000002199">
    <property type="component" value="Chromosome"/>
</dbReference>
<dbReference type="GO" id="GO:0003950">
    <property type="term" value="F:NAD+ poly-ADP-ribosyltransferase activity"/>
    <property type="evidence" value="ECO:0007669"/>
    <property type="project" value="InterPro"/>
</dbReference>
<dbReference type="GO" id="GO:0000215">
    <property type="term" value="F:tRNA 2'-phosphotransferase activity"/>
    <property type="evidence" value="ECO:0007669"/>
    <property type="project" value="TreeGrafter"/>
</dbReference>
<dbReference type="GO" id="GO:0006388">
    <property type="term" value="P:tRNA splicing, via endonucleolytic cleavage and ligation"/>
    <property type="evidence" value="ECO:0007669"/>
    <property type="project" value="UniProtKB-UniRule"/>
</dbReference>
<dbReference type="Gene3D" id="3.20.170.30">
    <property type="match status" value="1"/>
</dbReference>
<dbReference type="Gene3D" id="1.10.10.970">
    <property type="entry name" value="RNA 2'-phosphotransferase, Tpt1/KptA family, N-terminal domain"/>
    <property type="match status" value="1"/>
</dbReference>
<dbReference type="HAMAP" id="MF_00299">
    <property type="entry name" value="KptA"/>
    <property type="match status" value="1"/>
</dbReference>
<dbReference type="InterPro" id="IPR002745">
    <property type="entry name" value="Ptrans_KptA/Tpt1"/>
</dbReference>
<dbReference type="InterPro" id="IPR042081">
    <property type="entry name" value="RNA_2'-PTrans_C"/>
</dbReference>
<dbReference type="InterPro" id="IPR022928">
    <property type="entry name" value="RNA_2'-PTrans_KptA"/>
</dbReference>
<dbReference type="InterPro" id="IPR042080">
    <property type="entry name" value="RNA_2'-PTrans_N"/>
</dbReference>
<dbReference type="PANTHER" id="PTHR12684">
    <property type="entry name" value="PUTATIVE PHOSPHOTRANSFERASE"/>
    <property type="match status" value="1"/>
</dbReference>
<dbReference type="PANTHER" id="PTHR12684:SF2">
    <property type="entry name" value="TRNA 2'-PHOSPHOTRANSFERASE 1"/>
    <property type="match status" value="1"/>
</dbReference>
<dbReference type="Pfam" id="PF01885">
    <property type="entry name" value="PTS_2-RNA"/>
    <property type="match status" value="1"/>
</dbReference>
<dbReference type="SUPFAM" id="SSF56399">
    <property type="entry name" value="ADP-ribosylation"/>
    <property type="match status" value="1"/>
</dbReference>
<evidence type="ECO:0000250" key="1"/>
<evidence type="ECO:0000305" key="2"/>
<feature type="chain" id="PRO_0000157486" description="Probable RNA 2'-phosphotransferase 2">
    <location>
        <begin position="1"/>
        <end position="216"/>
    </location>
</feature>
<sequence>MDLGICKRCGEFEGSCECGKGEVLLKSEDRKKVSKFLSGLLRHFGRDFGVRLDEDGWAELRDVLKILSERYGVGRKHVELIVKFDPKGRFELKNGRIRAKYGHSVEVRTDWSEGGEIPEKLYHATSPENLNSILKTGLLPMRRREVHMCSSPQEAIEVGKRHSSNPVLLEIDAKGLMQDGIEVRRKGKVYTVDFVPPKFIRVLSFDPRSPNPAKGY</sequence>
<gene>
    <name type="primary">kptA2</name>
    <name type="ordered locus">AF_1553</name>
</gene>
<protein>
    <recommendedName>
        <fullName>Probable RNA 2'-phosphotransferase 2</fullName>
        <ecNumber>2.7.1.-</ecNumber>
    </recommendedName>
</protein>
<organism>
    <name type="scientific">Archaeoglobus fulgidus (strain ATCC 49558 / DSM 4304 / JCM 9628 / NBRC 100126 / VC-16)</name>
    <dbReference type="NCBI Taxonomy" id="224325"/>
    <lineage>
        <taxon>Archaea</taxon>
        <taxon>Methanobacteriati</taxon>
        <taxon>Methanobacteriota</taxon>
        <taxon>Archaeoglobi</taxon>
        <taxon>Archaeoglobales</taxon>
        <taxon>Archaeoglobaceae</taxon>
        <taxon>Archaeoglobus</taxon>
    </lineage>
</organism>
<reference key="1">
    <citation type="journal article" date="1997" name="Nature">
        <title>The complete genome sequence of the hyperthermophilic, sulphate-reducing archaeon Archaeoglobus fulgidus.</title>
        <authorList>
            <person name="Klenk H.-P."/>
            <person name="Clayton R.A."/>
            <person name="Tomb J.-F."/>
            <person name="White O."/>
            <person name="Nelson K.E."/>
            <person name="Ketchum K.A."/>
            <person name="Dodson R.J."/>
            <person name="Gwinn M.L."/>
            <person name="Hickey E.K."/>
            <person name="Peterson J.D."/>
            <person name="Richardson D.L."/>
            <person name="Kerlavage A.R."/>
            <person name="Graham D.E."/>
            <person name="Kyrpides N.C."/>
            <person name="Fleischmann R.D."/>
            <person name="Quackenbush J."/>
            <person name="Lee N.H."/>
            <person name="Sutton G.G."/>
            <person name="Gill S.R."/>
            <person name="Kirkness E.F."/>
            <person name="Dougherty B.A."/>
            <person name="McKenney K."/>
            <person name="Adams M.D."/>
            <person name="Loftus B.J."/>
            <person name="Peterson S.N."/>
            <person name="Reich C.I."/>
            <person name="McNeil L.K."/>
            <person name="Badger J.H."/>
            <person name="Glodek A."/>
            <person name="Zhou L."/>
            <person name="Overbeek R."/>
            <person name="Gocayne J.D."/>
            <person name="Weidman J.F."/>
            <person name="McDonald L.A."/>
            <person name="Utterback T.R."/>
            <person name="Cotton M.D."/>
            <person name="Spriggs T."/>
            <person name="Artiach P."/>
            <person name="Kaine B.P."/>
            <person name="Sykes S.M."/>
            <person name="Sadow P.W."/>
            <person name="D'Andrea K.P."/>
            <person name="Bowman C."/>
            <person name="Fujii C."/>
            <person name="Garland S.A."/>
            <person name="Mason T.M."/>
            <person name="Olsen G.J."/>
            <person name="Fraser C.M."/>
            <person name="Smith H.O."/>
            <person name="Woese C.R."/>
            <person name="Venter J.C."/>
        </authorList>
    </citation>
    <scope>NUCLEOTIDE SEQUENCE [LARGE SCALE GENOMIC DNA]</scope>
    <source>
        <strain>ATCC 49558 / DSM 4304 / JCM 9628 / NBRC 100126 / VC-16</strain>
    </source>
</reference>
<accession>O28719</accession>
<proteinExistence type="inferred from homology"/>
<keyword id="KW-0520">NAD</keyword>
<keyword id="KW-1185">Reference proteome</keyword>
<keyword id="KW-0808">Transferase</keyword>
<comment type="function">
    <text evidence="1">Removes the 2'-phosphate from RNA via an intermediate in which the phosphate is ADP-ribosylated by NAD followed by a presumed transesterification to release the RNA and generate ADP-ribose 1''-2''-cyclic phosphate (APPR&gt;P). May function as an ADP-ribosylase (By similarity).</text>
</comment>
<comment type="similarity">
    <text evidence="2">Belongs to the KptA/TPT1 family.</text>
</comment>
<name>KPTA2_ARCFU</name>